<keyword id="KW-0004">4Fe-4S</keyword>
<keyword id="KW-0028">Amino-acid biosynthesis</keyword>
<keyword id="KW-0100">Branched-chain amino acid biosynthesis</keyword>
<keyword id="KW-0408">Iron</keyword>
<keyword id="KW-0411">Iron-sulfur</keyword>
<keyword id="KW-0432">Leucine biosynthesis</keyword>
<keyword id="KW-0456">Lyase</keyword>
<keyword id="KW-0479">Metal-binding</keyword>
<proteinExistence type="inferred from homology"/>
<accession>B1YD98</accession>
<gene>
    <name evidence="1" type="primary">leuC</name>
    <name type="ordered locus">Tneu_0824</name>
</gene>
<protein>
    <recommendedName>
        <fullName evidence="1">3-isopropylmalate dehydratase large subunit</fullName>
        <ecNumber evidence="1">4.2.1.33</ecNumber>
    </recommendedName>
    <alternativeName>
        <fullName evidence="1">Alpha-IPM isomerase</fullName>
        <shortName evidence="1">IPMI</shortName>
    </alternativeName>
    <alternativeName>
        <fullName evidence="1">Isopropylmalate isomerase</fullName>
    </alternativeName>
</protein>
<organism>
    <name type="scientific">Pyrobaculum neutrophilum (strain DSM 2338 / JCM 9278 / NBRC 100436 / V24Sta)</name>
    <name type="common">Thermoproteus neutrophilus</name>
    <dbReference type="NCBI Taxonomy" id="444157"/>
    <lineage>
        <taxon>Archaea</taxon>
        <taxon>Thermoproteota</taxon>
        <taxon>Thermoprotei</taxon>
        <taxon>Thermoproteales</taxon>
        <taxon>Thermoproteaceae</taxon>
        <taxon>Pyrobaculum</taxon>
    </lineage>
</organism>
<reference key="1">
    <citation type="submission" date="2008-03" db="EMBL/GenBank/DDBJ databases">
        <title>Complete sequence of Thermoproteus neutrophilus V24Sta.</title>
        <authorList>
            <consortium name="US DOE Joint Genome Institute"/>
            <person name="Copeland A."/>
            <person name="Lucas S."/>
            <person name="Lapidus A."/>
            <person name="Glavina del Rio T."/>
            <person name="Dalin E."/>
            <person name="Tice H."/>
            <person name="Bruce D."/>
            <person name="Goodwin L."/>
            <person name="Pitluck S."/>
            <person name="Sims D."/>
            <person name="Brettin T."/>
            <person name="Detter J.C."/>
            <person name="Han C."/>
            <person name="Kuske C.R."/>
            <person name="Schmutz J."/>
            <person name="Larimer F."/>
            <person name="Land M."/>
            <person name="Hauser L."/>
            <person name="Kyrpides N."/>
            <person name="Mikhailova N."/>
            <person name="Biddle J.F."/>
            <person name="Zhang Z."/>
            <person name="Fitz-Gibbon S.T."/>
            <person name="Lowe T.M."/>
            <person name="Saltikov C."/>
            <person name="House C.H."/>
            <person name="Richardson P."/>
        </authorList>
    </citation>
    <scope>NUCLEOTIDE SEQUENCE [LARGE SCALE GENOMIC DNA]</scope>
    <source>
        <strain>DSM 2338 / JCM 9278 / NBRC 100436 / V24Sta</strain>
    </source>
</reference>
<evidence type="ECO:0000255" key="1">
    <source>
        <dbReference type="HAMAP-Rule" id="MF_01027"/>
    </source>
</evidence>
<feature type="chain" id="PRO_1000135737" description="3-isopropylmalate dehydratase large subunit">
    <location>
        <begin position="1"/>
        <end position="415"/>
    </location>
</feature>
<feature type="binding site" evidence="1">
    <location>
        <position position="295"/>
    </location>
    <ligand>
        <name>[4Fe-4S] cluster</name>
        <dbReference type="ChEBI" id="CHEBI:49883"/>
    </ligand>
</feature>
<feature type="binding site" evidence="1">
    <location>
        <position position="353"/>
    </location>
    <ligand>
        <name>[4Fe-4S] cluster</name>
        <dbReference type="ChEBI" id="CHEBI:49883"/>
    </ligand>
</feature>
<feature type="binding site" evidence="1">
    <location>
        <position position="356"/>
    </location>
    <ligand>
        <name>[4Fe-4S] cluster</name>
        <dbReference type="ChEBI" id="CHEBI:49883"/>
    </ligand>
</feature>
<comment type="function">
    <text evidence="1">Catalyzes the isomerization between 2-isopropylmalate and 3-isopropylmalate, via the formation of 2-isopropylmaleate.</text>
</comment>
<comment type="catalytic activity">
    <reaction evidence="1">
        <text>(2R,3S)-3-isopropylmalate = (2S)-2-isopropylmalate</text>
        <dbReference type="Rhea" id="RHEA:32287"/>
        <dbReference type="ChEBI" id="CHEBI:1178"/>
        <dbReference type="ChEBI" id="CHEBI:35121"/>
        <dbReference type="EC" id="4.2.1.33"/>
    </reaction>
</comment>
<comment type="cofactor">
    <cofactor evidence="1">
        <name>[4Fe-4S] cluster</name>
        <dbReference type="ChEBI" id="CHEBI:49883"/>
    </cofactor>
    <text evidence="1">Binds 1 [4Fe-4S] cluster per subunit.</text>
</comment>
<comment type="pathway">
    <text evidence="1">Amino-acid biosynthesis; L-leucine biosynthesis; L-leucine from 3-methyl-2-oxobutanoate: step 2/4.</text>
</comment>
<comment type="subunit">
    <text evidence="1">Heterodimer of LeuC and LeuD.</text>
</comment>
<comment type="similarity">
    <text evidence="1">Belongs to the aconitase/IPM isomerase family. LeuC type 2 subfamily.</text>
</comment>
<sequence length="415" mass="44971">MPTWTEYIFQRKLGRAPSPGDVVEVVPDLVGFHDLTGYHVLEVLESMGKVEVFDKGRVVVAFDHLSPPPTQRAAEIMVYIRKHVKALGLPNFYDVGGGILHQIILEKYAMPEYVIFAADSHTNTAGAVGAFAHGMGATDIAAALKLGRTWVVVPAPFRVDVRGEFPPGVMGKDVALHLLKQFGAEGFNGYSVEVFVERPKAFPMDDRATVANMSTEMGADALMFIPDEVTADYLQRERGVSYKPPSLEPGRYVDRYEVELQRLEPLVAAPYSVDNVKAAREVEGVEVDQVFIGSCTNGRLSDFEVAARVLKRGRAKARCIAIPASYAVFRRAMELGYIDVLTKAGCVVTYGTCGPCLGGHFGVAGPGEVVVTTSNRNFKGRVGHPDSKVYLANPATAAAAALEGKIVDPRPYLAP</sequence>
<dbReference type="EC" id="4.2.1.33" evidence="1"/>
<dbReference type="EMBL" id="CP001014">
    <property type="protein sequence ID" value="ACB39761.1"/>
    <property type="molecule type" value="Genomic_DNA"/>
</dbReference>
<dbReference type="RefSeq" id="WP_012350181.1">
    <property type="nucleotide sequence ID" value="NC_010525.1"/>
</dbReference>
<dbReference type="SMR" id="B1YD98"/>
<dbReference type="STRING" id="444157.Tneu_0824"/>
<dbReference type="GeneID" id="6164552"/>
<dbReference type="KEGG" id="tne:Tneu_0824"/>
<dbReference type="eggNOG" id="arCOG01698">
    <property type="taxonomic scope" value="Archaea"/>
</dbReference>
<dbReference type="HOGENOM" id="CLU_006714_3_4_2"/>
<dbReference type="OrthoDB" id="255at2157"/>
<dbReference type="UniPathway" id="UPA00048">
    <property type="reaction ID" value="UER00071"/>
</dbReference>
<dbReference type="Proteomes" id="UP000001694">
    <property type="component" value="Chromosome"/>
</dbReference>
<dbReference type="GO" id="GO:0003861">
    <property type="term" value="F:3-isopropylmalate dehydratase activity"/>
    <property type="evidence" value="ECO:0007669"/>
    <property type="project" value="UniProtKB-UniRule"/>
</dbReference>
<dbReference type="GO" id="GO:0051539">
    <property type="term" value="F:4 iron, 4 sulfur cluster binding"/>
    <property type="evidence" value="ECO:0007669"/>
    <property type="project" value="UniProtKB-KW"/>
</dbReference>
<dbReference type="GO" id="GO:0046872">
    <property type="term" value="F:metal ion binding"/>
    <property type="evidence" value="ECO:0007669"/>
    <property type="project" value="UniProtKB-KW"/>
</dbReference>
<dbReference type="GO" id="GO:0009098">
    <property type="term" value="P:L-leucine biosynthetic process"/>
    <property type="evidence" value="ECO:0007669"/>
    <property type="project" value="UniProtKB-UniRule"/>
</dbReference>
<dbReference type="Gene3D" id="3.30.499.10">
    <property type="entry name" value="Aconitase, domain 3"/>
    <property type="match status" value="2"/>
</dbReference>
<dbReference type="HAMAP" id="MF_01027">
    <property type="entry name" value="LeuC_type2"/>
    <property type="match status" value="1"/>
</dbReference>
<dbReference type="InterPro" id="IPR015931">
    <property type="entry name" value="Acnase/IPM_dHydase_lsu_aba_1/3"/>
</dbReference>
<dbReference type="InterPro" id="IPR001030">
    <property type="entry name" value="Acoase/IPM_deHydtase_lsu_aba"/>
</dbReference>
<dbReference type="InterPro" id="IPR018136">
    <property type="entry name" value="Aconitase_4Fe-4S_BS"/>
</dbReference>
<dbReference type="InterPro" id="IPR036008">
    <property type="entry name" value="Aconitase_4Fe-4S_dom"/>
</dbReference>
<dbReference type="InterPro" id="IPR011826">
    <property type="entry name" value="HAcnase/IPMdehydase_lsu_prok"/>
</dbReference>
<dbReference type="InterPro" id="IPR006251">
    <property type="entry name" value="Homoacnase/IPMdehydase_lsu"/>
</dbReference>
<dbReference type="InterPro" id="IPR050067">
    <property type="entry name" value="IPM_dehydratase_rel_enz"/>
</dbReference>
<dbReference type="NCBIfam" id="TIGR01343">
    <property type="entry name" value="hacA_fam"/>
    <property type="match status" value="1"/>
</dbReference>
<dbReference type="NCBIfam" id="TIGR02086">
    <property type="entry name" value="IPMI_arch"/>
    <property type="match status" value="1"/>
</dbReference>
<dbReference type="NCBIfam" id="NF001614">
    <property type="entry name" value="PRK00402.1"/>
    <property type="match status" value="1"/>
</dbReference>
<dbReference type="PANTHER" id="PTHR43822:SF2">
    <property type="entry name" value="HOMOACONITASE, MITOCHONDRIAL"/>
    <property type="match status" value="1"/>
</dbReference>
<dbReference type="PANTHER" id="PTHR43822">
    <property type="entry name" value="HOMOACONITASE, MITOCHONDRIAL-RELATED"/>
    <property type="match status" value="1"/>
</dbReference>
<dbReference type="Pfam" id="PF00330">
    <property type="entry name" value="Aconitase"/>
    <property type="match status" value="2"/>
</dbReference>
<dbReference type="PRINTS" id="PR00415">
    <property type="entry name" value="ACONITASE"/>
</dbReference>
<dbReference type="SUPFAM" id="SSF53732">
    <property type="entry name" value="Aconitase iron-sulfur domain"/>
    <property type="match status" value="1"/>
</dbReference>
<dbReference type="PROSITE" id="PS01244">
    <property type="entry name" value="ACONITASE_2"/>
    <property type="match status" value="1"/>
</dbReference>
<name>LEUC_PYRNV</name>